<sequence>MLNLAKELVGDEALGLLKYLIGKKSEITDEEIAKELNTKPNEVRKYLYLLSDHGLVTYRKTKDKDSNLYIYYWKVNVNQINEILLSRKRLILEKLRNRYEQEKDGLFYFCPQDNIKYSFDDAIENEFKCLKCGTSLSQYDSEKARSFLEQKIKQIEEEINKEIRRESSKSY</sequence>
<accession>Q4JAZ3</accession>
<accession>Q877H5</accession>
<name>TFE_SULAC</name>
<keyword id="KW-0238">DNA-binding</keyword>
<keyword id="KW-1185">Reference proteome</keyword>
<keyword id="KW-0804">Transcription</keyword>
<keyword id="KW-0805">Transcription regulation</keyword>
<protein>
    <recommendedName>
        <fullName evidence="1">Transcription factor E</fullName>
        <shortName evidence="1">TFE</shortName>
    </recommendedName>
    <alternativeName>
        <fullName evidence="1">TFIIE subunit alpha homolog</fullName>
    </alternativeName>
    <alternativeName>
        <fullName evidence="1">Transcription initiation factor TFIIE</fullName>
    </alternativeName>
</protein>
<gene>
    <name evidence="1" type="primary">tfe</name>
    <name type="ordered locus">Saci_0652</name>
</gene>
<comment type="function">
    <text evidence="1">Transcription factor that plays a role in the activation of archaeal genes transcribed by RNA polymerase. Facilitates transcription initiation by enhancing TATA-box recognition by TATA-box-binding protein (Tbp), and transcription factor B (Tfb) and RNA polymerase recruitment. Not absolutely required for transcription in vitro, but particularly important in cases where Tbp or Tfb function is not optimal. It dynamically alters the nucleic acid-binding properties of RNA polymerases by stabilizing the initiation complex and destabilizing elongation complexes. Seems to translocate with the RNA polymerase following initiation and acts by binding to the non template strand of the transcription bubble in elongation complexes.</text>
</comment>
<comment type="subunit">
    <text evidence="1">Monomer. Interaction with RNA polymerase subunits RpoF and RpoE is necessary for Tfe stimulatory transcription activity. Able to interact with Tbp and RNA polymerase in the absence of DNA promoter. Interacts both with the preinitiation and elongation complexes.</text>
</comment>
<comment type="domain">
    <text evidence="1">The winged helix domain is involved in binding to DNA in the preinitiation complex.</text>
</comment>
<comment type="similarity">
    <text evidence="1">Belongs to the TFE family.</text>
</comment>
<comment type="sequence caution" evidence="2">
    <conflict type="erroneous initiation">
        <sequence resource="EMBL-CDS" id="AAY80036"/>
    </conflict>
</comment>
<reference key="1">
    <citation type="submission" date="2003-02" db="EMBL/GenBank/DDBJ databases">
        <title>AAA family ATPase in the archeae Sulfolobus acidocaldarius.</title>
        <authorList>
            <person name="Esnault C."/>
            <person name="Duguet M."/>
        </authorList>
    </citation>
    <scope>NUCLEOTIDE SEQUENCE [GENOMIC DNA]</scope>
    <source>
        <strain>ATCC 33909 / DSM 639 / JCM 8929 / NBRC 15157 / NCIMB 11770</strain>
    </source>
</reference>
<reference key="2">
    <citation type="journal article" date="2005" name="J. Bacteriol.">
        <title>The genome of Sulfolobus acidocaldarius, a model organism of the Crenarchaeota.</title>
        <authorList>
            <person name="Chen L."/>
            <person name="Bruegger K."/>
            <person name="Skovgaard M."/>
            <person name="Redder P."/>
            <person name="She Q."/>
            <person name="Torarinsson E."/>
            <person name="Greve B."/>
            <person name="Awayez M."/>
            <person name="Zibat A."/>
            <person name="Klenk H.-P."/>
            <person name="Garrett R.A."/>
        </authorList>
    </citation>
    <scope>NUCLEOTIDE SEQUENCE [LARGE SCALE GENOMIC DNA]</scope>
    <source>
        <strain>ATCC 33909 / DSM 639 / JCM 8929 / NBRC 15157 / NCIMB 11770</strain>
    </source>
</reference>
<evidence type="ECO:0000255" key="1">
    <source>
        <dbReference type="HAMAP-Rule" id="MF_01909"/>
    </source>
</evidence>
<evidence type="ECO:0000305" key="2"/>
<feature type="chain" id="PRO_0000326623" description="Transcription factor E">
    <location>
        <begin position="1"/>
        <end position="171"/>
    </location>
</feature>
<feature type="domain" description="HTH TFE/IIEalpha-type" evidence="1">
    <location>
        <begin position="1"/>
        <end position="81"/>
    </location>
</feature>
<dbReference type="EMBL" id="AY229998">
    <property type="protein sequence ID" value="AAO73479.1"/>
    <property type="molecule type" value="Genomic_DNA"/>
</dbReference>
<dbReference type="EMBL" id="CP000077">
    <property type="protein sequence ID" value="AAY80036.1"/>
    <property type="status" value="ALT_INIT"/>
    <property type="molecule type" value="Genomic_DNA"/>
</dbReference>
<dbReference type="RefSeq" id="WP_015385468.1">
    <property type="nucleotide sequence ID" value="NC_007181.1"/>
</dbReference>
<dbReference type="SMR" id="Q4JAZ3"/>
<dbReference type="STRING" id="330779.Saci_0652"/>
<dbReference type="GeneID" id="14551171"/>
<dbReference type="KEGG" id="sai:Saci_0652"/>
<dbReference type="PATRIC" id="fig|330779.12.peg.623"/>
<dbReference type="eggNOG" id="arCOG04270">
    <property type="taxonomic scope" value="Archaea"/>
</dbReference>
<dbReference type="HOGENOM" id="CLU_100097_0_0_2"/>
<dbReference type="Proteomes" id="UP000001018">
    <property type="component" value="Chromosome"/>
</dbReference>
<dbReference type="GO" id="GO:0003677">
    <property type="term" value="F:DNA binding"/>
    <property type="evidence" value="ECO:0007669"/>
    <property type="project" value="UniProtKB-KW"/>
</dbReference>
<dbReference type="GO" id="GO:0006355">
    <property type="term" value="P:regulation of DNA-templated transcription"/>
    <property type="evidence" value="ECO:0007669"/>
    <property type="project" value="InterPro"/>
</dbReference>
<dbReference type="GO" id="GO:0006367">
    <property type="term" value="P:transcription initiation at RNA polymerase II promoter"/>
    <property type="evidence" value="ECO:0007669"/>
    <property type="project" value="InterPro"/>
</dbReference>
<dbReference type="Gene3D" id="1.10.10.10">
    <property type="entry name" value="Winged helix-like DNA-binding domain superfamily/Winged helix DNA-binding domain"/>
    <property type="match status" value="1"/>
</dbReference>
<dbReference type="HAMAP" id="MF_01909">
    <property type="entry name" value="TFE_arch"/>
    <property type="match status" value="1"/>
</dbReference>
<dbReference type="InterPro" id="IPR016481">
    <property type="entry name" value="TF_E_archaea"/>
</dbReference>
<dbReference type="InterPro" id="IPR039997">
    <property type="entry name" value="TFE"/>
</dbReference>
<dbReference type="InterPro" id="IPR017919">
    <property type="entry name" value="TFIIE/TFIIEa_HTH"/>
</dbReference>
<dbReference type="InterPro" id="IPR002853">
    <property type="entry name" value="TFIIE_asu"/>
</dbReference>
<dbReference type="InterPro" id="IPR024550">
    <property type="entry name" value="TFIIEa/SarR/Rpc3_HTH_dom"/>
</dbReference>
<dbReference type="InterPro" id="IPR036388">
    <property type="entry name" value="WH-like_DNA-bd_sf"/>
</dbReference>
<dbReference type="InterPro" id="IPR036390">
    <property type="entry name" value="WH_DNA-bd_sf"/>
</dbReference>
<dbReference type="PANTHER" id="PTHR13097:SF7">
    <property type="entry name" value="GENERAL TRANSCRIPTION FACTOR IIE SUBUNIT 1"/>
    <property type="match status" value="1"/>
</dbReference>
<dbReference type="PANTHER" id="PTHR13097">
    <property type="entry name" value="TRANSCRIPTION INITIATION FACTOR IIE, ALPHA SUBUNIT"/>
    <property type="match status" value="1"/>
</dbReference>
<dbReference type="Pfam" id="PF02002">
    <property type="entry name" value="TFIIE_alpha"/>
    <property type="match status" value="1"/>
</dbReference>
<dbReference type="PIRSF" id="PIRSF006373">
    <property type="entry name" value="TF_E_archaea"/>
    <property type="match status" value="1"/>
</dbReference>
<dbReference type="SMART" id="SM00531">
    <property type="entry name" value="TFIIE"/>
    <property type="match status" value="1"/>
</dbReference>
<dbReference type="SUPFAM" id="SSF46785">
    <property type="entry name" value="Winged helix' DNA-binding domain"/>
    <property type="match status" value="1"/>
</dbReference>
<dbReference type="PROSITE" id="PS51344">
    <property type="entry name" value="HTH_TFE_IIE"/>
    <property type="match status" value="1"/>
</dbReference>
<proteinExistence type="inferred from homology"/>
<organism>
    <name type="scientific">Sulfolobus acidocaldarius (strain ATCC 33909 / DSM 639 / JCM 8929 / NBRC 15157 / NCIMB 11770)</name>
    <dbReference type="NCBI Taxonomy" id="330779"/>
    <lineage>
        <taxon>Archaea</taxon>
        <taxon>Thermoproteota</taxon>
        <taxon>Thermoprotei</taxon>
        <taxon>Sulfolobales</taxon>
        <taxon>Sulfolobaceae</taxon>
        <taxon>Sulfolobus</taxon>
    </lineage>
</organism>